<accession>B3A0A2</accession>
<protein>
    <recommendedName>
        <fullName evidence="4">Extended FMRFamide-3</fullName>
        <shortName evidence="4">FMRFa-3</shortName>
    </recommendedName>
</protein>
<evidence type="ECO:0000250" key="1">
    <source>
        <dbReference type="UniProtKB" id="P34405"/>
    </source>
</evidence>
<evidence type="ECO:0000255" key="2"/>
<evidence type="ECO:0000269" key="3">
    <source>
    </source>
</evidence>
<evidence type="ECO:0000303" key="4">
    <source>
    </source>
</evidence>
<evidence type="ECO:0000305" key="5"/>
<evidence type="ECO:0000305" key="6">
    <source>
    </source>
</evidence>
<dbReference type="GO" id="GO:0005576">
    <property type="term" value="C:extracellular region"/>
    <property type="evidence" value="ECO:0007669"/>
    <property type="project" value="UniProtKB-SubCell"/>
</dbReference>
<dbReference type="GO" id="GO:0007218">
    <property type="term" value="P:neuropeptide signaling pathway"/>
    <property type="evidence" value="ECO:0007669"/>
    <property type="project" value="UniProtKB-KW"/>
</dbReference>
<name>FAR3_AUSRA</name>
<keyword id="KW-0027">Amidation</keyword>
<keyword id="KW-0903">Direct protein sequencing</keyword>
<keyword id="KW-0527">Neuropeptide</keyword>
<keyword id="KW-0964">Secreted</keyword>
<proteinExistence type="evidence at protein level"/>
<feature type="peptide" id="PRO_0000421494" description="Extended FMRFamide-3" evidence="3">
    <location>
        <begin position="1"/>
        <end position="9"/>
    </location>
</feature>
<feature type="modified residue" description="Leucine amide" evidence="3">
    <location>
        <position position="9"/>
    </location>
</feature>
<feature type="unsure residue" description="L or I" evidence="3">
    <location>
        <position position="7"/>
    </location>
</feature>
<feature type="unsure residue" description="L or I" evidence="3">
    <location>
        <position position="9"/>
    </location>
</feature>
<organism>
    <name type="scientific">Austrophasma rawsonvillense</name>
    <name type="common">Gladiator</name>
    <name type="synonym">Heel-walker</name>
    <dbReference type="NCBI Taxonomy" id="253137"/>
    <lineage>
        <taxon>Eukaryota</taxon>
        <taxon>Metazoa</taxon>
        <taxon>Ecdysozoa</taxon>
        <taxon>Arthropoda</taxon>
        <taxon>Hexapoda</taxon>
        <taxon>Insecta</taxon>
        <taxon>Pterygota</taxon>
        <taxon>Neoptera</taxon>
        <taxon>Polyneoptera</taxon>
        <taxon>Mantophasmatodea</taxon>
        <taxon>Austrophasmatidae</taxon>
        <taxon>Austrophasma</taxon>
    </lineage>
</organism>
<sequence length="9" mass="991">GPDSSFLRL</sequence>
<comment type="function">
    <text evidence="1">FMRFamides and FMRFamide-like peptides are neuropeptides.</text>
</comment>
<comment type="subcellular location">
    <subcellularLocation>
        <location evidence="6">Secreted</location>
    </subcellularLocation>
</comment>
<comment type="similarity">
    <text evidence="2">Belongs to the FARP (FMRF amide related peptide) family.</text>
</comment>
<reference evidence="5" key="1">
    <citation type="journal article" date="2012" name="Syst. Biol.">
        <title>Peptidomics-based phylogeny and biogeography of Mantophasmatodea (Hexapoda).</title>
        <authorList>
            <person name="Predel R."/>
            <person name="Neupert S."/>
            <person name="Huetteroth W."/>
            <person name="Kahnt J."/>
            <person name="Waidelich D."/>
            <person name="Roth S."/>
        </authorList>
    </citation>
    <scope>PROTEIN SEQUENCE</scope>
    <scope>AMIDATION AT LEU-9</scope>
    <source>
        <tissue evidence="3">Thoracic perisympathetic organs</tissue>
    </source>
</reference>